<protein>
    <recommendedName>
        <fullName evidence="1">Large ribosomal subunit protein uL29</fullName>
    </recommendedName>
    <alternativeName>
        <fullName evidence="2">50S ribosomal protein L29</fullName>
    </alternativeName>
</protein>
<evidence type="ECO:0000255" key="1">
    <source>
        <dbReference type="HAMAP-Rule" id="MF_00374"/>
    </source>
</evidence>
<evidence type="ECO:0000305" key="2"/>
<reference key="1">
    <citation type="journal article" date="2010" name="PLoS Genet.">
        <title>Genome sequence of the plant growth promoting endophytic bacterium Enterobacter sp. 638.</title>
        <authorList>
            <person name="Taghavi S."/>
            <person name="van der Lelie D."/>
            <person name="Hoffman A."/>
            <person name="Zhang Y.B."/>
            <person name="Walla M.D."/>
            <person name="Vangronsveld J."/>
            <person name="Newman L."/>
            <person name="Monchy S."/>
        </authorList>
    </citation>
    <scope>NUCLEOTIDE SEQUENCE [LARGE SCALE GENOMIC DNA]</scope>
    <source>
        <strain>638</strain>
    </source>
</reference>
<feature type="chain" id="PRO_1000059967" description="Large ribosomal subunit protein uL29">
    <location>
        <begin position="1"/>
        <end position="63"/>
    </location>
</feature>
<dbReference type="EMBL" id="CP000653">
    <property type="protein sequence ID" value="ABP62400.1"/>
    <property type="molecule type" value="Genomic_DNA"/>
</dbReference>
<dbReference type="RefSeq" id="WP_006817276.1">
    <property type="nucleotide sequence ID" value="NC_009436.1"/>
</dbReference>
<dbReference type="SMR" id="A4WFC0"/>
<dbReference type="STRING" id="399742.Ent638_3743"/>
<dbReference type="GeneID" id="93306718"/>
<dbReference type="KEGG" id="ent:Ent638_3743"/>
<dbReference type="eggNOG" id="COG0255">
    <property type="taxonomic scope" value="Bacteria"/>
</dbReference>
<dbReference type="HOGENOM" id="CLU_158491_1_2_6"/>
<dbReference type="OrthoDB" id="9815192at2"/>
<dbReference type="Proteomes" id="UP000000230">
    <property type="component" value="Chromosome"/>
</dbReference>
<dbReference type="GO" id="GO:0022625">
    <property type="term" value="C:cytosolic large ribosomal subunit"/>
    <property type="evidence" value="ECO:0007669"/>
    <property type="project" value="TreeGrafter"/>
</dbReference>
<dbReference type="GO" id="GO:0003735">
    <property type="term" value="F:structural constituent of ribosome"/>
    <property type="evidence" value="ECO:0007669"/>
    <property type="project" value="InterPro"/>
</dbReference>
<dbReference type="GO" id="GO:0006412">
    <property type="term" value="P:translation"/>
    <property type="evidence" value="ECO:0007669"/>
    <property type="project" value="UniProtKB-UniRule"/>
</dbReference>
<dbReference type="CDD" id="cd00427">
    <property type="entry name" value="Ribosomal_L29_HIP"/>
    <property type="match status" value="1"/>
</dbReference>
<dbReference type="FunFam" id="1.10.287.310:FF:000001">
    <property type="entry name" value="50S ribosomal protein L29"/>
    <property type="match status" value="1"/>
</dbReference>
<dbReference type="Gene3D" id="1.10.287.310">
    <property type="match status" value="1"/>
</dbReference>
<dbReference type="HAMAP" id="MF_00374">
    <property type="entry name" value="Ribosomal_uL29"/>
    <property type="match status" value="1"/>
</dbReference>
<dbReference type="InterPro" id="IPR050063">
    <property type="entry name" value="Ribosomal_protein_uL29"/>
</dbReference>
<dbReference type="InterPro" id="IPR001854">
    <property type="entry name" value="Ribosomal_uL29"/>
</dbReference>
<dbReference type="InterPro" id="IPR018254">
    <property type="entry name" value="Ribosomal_uL29_CS"/>
</dbReference>
<dbReference type="InterPro" id="IPR036049">
    <property type="entry name" value="Ribosomal_uL29_sf"/>
</dbReference>
<dbReference type="NCBIfam" id="TIGR00012">
    <property type="entry name" value="L29"/>
    <property type="match status" value="1"/>
</dbReference>
<dbReference type="PANTHER" id="PTHR10916">
    <property type="entry name" value="60S RIBOSOMAL PROTEIN L35/50S RIBOSOMAL PROTEIN L29"/>
    <property type="match status" value="1"/>
</dbReference>
<dbReference type="PANTHER" id="PTHR10916:SF0">
    <property type="entry name" value="LARGE RIBOSOMAL SUBUNIT PROTEIN UL29C"/>
    <property type="match status" value="1"/>
</dbReference>
<dbReference type="Pfam" id="PF00831">
    <property type="entry name" value="Ribosomal_L29"/>
    <property type="match status" value="1"/>
</dbReference>
<dbReference type="SUPFAM" id="SSF46561">
    <property type="entry name" value="Ribosomal protein L29 (L29p)"/>
    <property type="match status" value="1"/>
</dbReference>
<dbReference type="PROSITE" id="PS00579">
    <property type="entry name" value="RIBOSOMAL_L29"/>
    <property type="match status" value="1"/>
</dbReference>
<organism>
    <name type="scientific">Enterobacter sp. (strain 638)</name>
    <dbReference type="NCBI Taxonomy" id="399742"/>
    <lineage>
        <taxon>Bacteria</taxon>
        <taxon>Pseudomonadati</taxon>
        <taxon>Pseudomonadota</taxon>
        <taxon>Gammaproteobacteria</taxon>
        <taxon>Enterobacterales</taxon>
        <taxon>Enterobacteriaceae</taxon>
        <taxon>Enterobacter</taxon>
    </lineage>
</organism>
<name>RL29_ENT38</name>
<accession>A4WFC0</accession>
<gene>
    <name evidence="1" type="primary">rpmC</name>
    <name type="ordered locus">Ent638_3743</name>
</gene>
<comment type="similarity">
    <text evidence="1">Belongs to the universal ribosomal protein uL29 family.</text>
</comment>
<proteinExistence type="inferred from homology"/>
<sequence>MKANELREKSVEELNAELLNLLREQFNLRMQAASGQLQQTHLLKQVRRNVARVKTLLTQKAGA</sequence>
<keyword id="KW-0687">Ribonucleoprotein</keyword>
<keyword id="KW-0689">Ribosomal protein</keyword>